<feature type="chain" id="PRO_0000140299" description="Peptide methionine sulfoxide reductase MsrB">
    <location>
        <begin position="1"/>
        <end position="142"/>
    </location>
</feature>
<feature type="domain" description="MsrB" evidence="1">
    <location>
        <begin position="2"/>
        <end position="125"/>
    </location>
</feature>
<feature type="active site" description="Nucleophile" evidence="1">
    <location>
        <position position="114"/>
    </location>
</feature>
<protein>
    <recommendedName>
        <fullName>Peptide methionine sulfoxide reductase MsrB</fullName>
        <ecNumber>1.8.4.12</ecNumber>
    </recommendedName>
    <alternativeName>
        <fullName>Peptide-methionine (R)-S-oxide reductase</fullName>
    </alternativeName>
</protein>
<evidence type="ECO:0000255" key="1">
    <source>
        <dbReference type="PROSITE-ProRule" id="PRU01126"/>
    </source>
</evidence>
<evidence type="ECO:0000269" key="2">
    <source>
    </source>
</evidence>
<evidence type="ECO:0000269" key="3">
    <source>
    </source>
</evidence>
<evidence type="ECO:0000305" key="4"/>
<gene>
    <name type="primary">msrB</name>
    <name type="synonym">pilB</name>
    <name type="ordered locus">SAOUHSC_01431</name>
</gene>
<reference key="1">
    <citation type="journal article" date="2001" name="Microbiology">
        <title>Molecular characterization of a chromosomal locus in Staphylococcus aureus that contributes to oxidative defence and is highly induced by the cell-wall-active antibiotic oxacillin.</title>
        <authorList>
            <person name="Singh V.K."/>
            <person name="Moskovitz J."/>
            <person name="Wilkinson B.J."/>
            <person name="Jayaswal R.K."/>
        </authorList>
    </citation>
    <scope>NUCLEOTIDE SEQUENCE [GENOMIC DNA]</scope>
    <scope>CATALYTIC ACTIVITY</scope>
</reference>
<reference key="2">
    <citation type="book" date="2006" name="Gram positive pathogens, 2nd edition">
        <title>The Staphylococcus aureus NCTC 8325 genome.</title>
        <editorList>
            <person name="Fischetti V."/>
            <person name="Novick R."/>
            <person name="Ferretti J."/>
            <person name="Portnoy D."/>
            <person name="Rood J."/>
        </editorList>
        <authorList>
            <person name="Gillaspy A.F."/>
            <person name="Worrell V."/>
            <person name="Orvis J."/>
            <person name="Roe B.A."/>
            <person name="Dyer D.W."/>
            <person name="Iandolo J.J."/>
        </authorList>
    </citation>
    <scope>NUCLEOTIDE SEQUENCE [LARGE SCALE GENOMIC DNA]</scope>
    <source>
        <strain>NCTC 8325 / PS 47</strain>
    </source>
</reference>
<reference key="3">
    <citation type="journal article" date="2002" name="Biochem. Biophys. Res. Commun.">
        <title>Purification and characterization of methionine sulfoxide reductases from mouse and Staphylococcus aureus and their substrate stereospecificity.</title>
        <authorList>
            <person name="Moskovitz J."/>
            <person name="Singh V.K."/>
            <person name="Requena J."/>
            <person name="Wilkinson B.J."/>
            <person name="Jayaswal R.K."/>
            <person name="Stadtman E.R."/>
        </authorList>
    </citation>
    <scope>CATALYTIC ACTIVITY</scope>
    <scope>STEREOSPECIFICITY</scope>
</reference>
<dbReference type="EC" id="1.8.4.12"/>
<dbReference type="EMBL" id="AF349112">
    <property type="protein sequence ID" value="AAK83252.1"/>
    <property type="molecule type" value="Genomic_DNA"/>
</dbReference>
<dbReference type="EMBL" id="CP000253">
    <property type="protein sequence ID" value="ABD30523.1"/>
    <property type="molecule type" value="Genomic_DNA"/>
</dbReference>
<dbReference type="RefSeq" id="WP_000913315.1">
    <property type="nucleotide sequence ID" value="NZ_LS483365.1"/>
</dbReference>
<dbReference type="RefSeq" id="YP_499956.1">
    <property type="nucleotide sequence ID" value="NC_007795.1"/>
</dbReference>
<dbReference type="SMR" id="P0A088"/>
<dbReference type="STRING" id="93061.SAOUHSC_01431"/>
<dbReference type="PaxDb" id="1280-SAXN108_1444"/>
<dbReference type="GeneID" id="3920212"/>
<dbReference type="KEGG" id="sao:SAOUHSC_01431"/>
<dbReference type="PATRIC" id="fig|93061.5.peg.1307"/>
<dbReference type="eggNOG" id="COG0229">
    <property type="taxonomic scope" value="Bacteria"/>
</dbReference>
<dbReference type="HOGENOM" id="CLU_031040_8_5_9"/>
<dbReference type="OrthoDB" id="4174719at2"/>
<dbReference type="PHI-base" id="PHI:4582"/>
<dbReference type="PRO" id="PR:P0A088"/>
<dbReference type="Proteomes" id="UP000008816">
    <property type="component" value="Chromosome"/>
</dbReference>
<dbReference type="GO" id="GO:0005737">
    <property type="term" value="C:cytoplasm"/>
    <property type="evidence" value="ECO:0000318"/>
    <property type="project" value="GO_Central"/>
</dbReference>
<dbReference type="GO" id="GO:0033743">
    <property type="term" value="F:peptide-methionine (R)-S-oxide reductase activity"/>
    <property type="evidence" value="ECO:0000318"/>
    <property type="project" value="GO_Central"/>
</dbReference>
<dbReference type="GO" id="GO:0030091">
    <property type="term" value="P:protein repair"/>
    <property type="evidence" value="ECO:0007669"/>
    <property type="project" value="InterPro"/>
</dbReference>
<dbReference type="GO" id="GO:0006979">
    <property type="term" value="P:response to oxidative stress"/>
    <property type="evidence" value="ECO:0007669"/>
    <property type="project" value="InterPro"/>
</dbReference>
<dbReference type="FunFam" id="2.170.150.20:FF:000003">
    <property type="entry name" value="Peptide methionine sulfoxide reductase MsrB"/>
    <property type="match status" value="1"/>
</dbReference>
<dbReference type="Gene3D" id="2.170.150.20">
    <property type="entry name" value="Peptide methionine sulfoxide reductase"/>
    <property type="match status" value="1"/>
</dbReference>
<dbReference type="HAMAP" id="MF_01400">
    <property type="entry name" value="MsrB"/>
    <property type="match status" value="1"/>
</dbReference>
<dbReference type="InterPro" id="IPR028427">
    <property type="entry name" value="Met_Sox_Rdtase_MsrB"/>
</dbReference>
<dbReference type="InterPro" id="IPR002579">
    <property type="entry name" value="Met_Sox_Rdtase_MsrB_dom"/>
</dbReference>
<dbReference type="InterPro" id="IPR011057">
    <property type="entry name" value="Mss4-like_sf"/>
</dbReference>
<dbReference type="NCBIfam" id="TIGR00357">
    <property type="entry name" value="peptide-methionine (R)-S-oxide reductase MsrB"/>
    <property type="match status" value="1"/>
</dbReference>
<dbReference type="PANTHER" id="PTHR10173">
    <property type="entry name" value="METHIONINE SULFOXIDE REDUCTASE"/>
    <property type="match status" value="1"/>
</dbReference>
<dbReference type="PANTHER" id="PTHR10173:SF59">
    <property type="entry name" value="PEPTIDE METHIONINE SULFOXIDE REDUCTASE MSRA_MSRB"/>
    <property type="match status" value="1"/>
</dbReference>
<dbReference type="Pfam" id="PF01641">
    <property type="entry name" value="SelR"/>
    <property type="match status" value="1"/>
</dbReference>
<dbReference type="SUPFAM" id="SSF51316">
    <property type="entry name" value="Mss4-like"/>
    <property type="match status" value="1"/>
</dbReference>
<dbReference type="PROSITE" id="PS51790">
    <property type="entry name" value="MSRB"/>
    <property type="match status" value="1"/>
</dbReference>
<comment type="catalytic activity">
    <reaction evidence="2 3">
        <text>L-methionyl-[protein] + [thioredoxin]-disulfide + H2O = L-methionyl-(R)-S-oxide-[protein] + [thioredoxin]-dithiol</text>
        <dbReference type="Rhea" id="RHEA:24164"/>
        <dbReference type="Rhea" id="RHEA-COMP:10698"/>
        <dbReference type="Rhea" id="RHEA-COMP:10700"/>
        <dbReference type="Rhea" id="RHEA-COMP:12313"/>
        <dbReference type="Rhea" id="RHEA-COMP:12314"/>
        <dbReference type="ChEBI" id="CHEBI:15377"/>
        <dbReference type="ChEBI" id="CHEBI:16044"/>
        <dbReference type="ChEBI" id="CHEBI:29950"/>
        <dbReference type="ChEBI" id="CHEBI:45764"/>
        <dbReference type="ChEBI" id="CHEBI:50058"/>
        <dbReference type="EC" id="1.8.4.12"/>
    </reaction>
</comment>
<comment type="miscellaneous">
    <text>Stereospecific for the R isomer of MetO.</text>
</comment>
<comment type="similarity">
    <text evidence="4">Belongs to the MsrB Met sulfoxide reductase family.</text>
</comment>
<accession>P0A088</accession>
<accession>Q2FYK9</accession>
<accession>Q93P62</accession>
<keyword id="KW-0560">Oxidoreductase</keyword>
<keyword id="KW-1185">Reference proteome</keyword>
<proteinExistence type="evidence at protein level"/>
<sequence>MLKKDKSELTDIEYIVTQENGTEPPFMNEYWNHFAKGIYVDKISGKPLFTSEEKFHSECGWPSFSKALDDDEIIELVDKSFGMLRTEVRSEESNSHLGHVFNDGPKESGGLRYCINSAAIQFIPYEKLEELGYGDLISHFDK</sequence>
<name>MSRB_STAA8</name>
<organism>
    <name type="scientific">Staphylococcus aureus (strain NCTC 8325 / PS 47)</name>
    <dbReference type="NCBI Taxonomy" id="93061"/>
    <lineage>
        <taxon>Bacteria</taxon>
        <taxon>Bacillati</taxon>
        <taxon>Bacillota</taxon>
        <taxon>Bacilli</taxon>
        <taxon>Bacillales</taxon>
        <taxon>Staphylococcaceae</taxon>
        <taxon>Staphylococcus</taxon>
    </lineage>
</organism>